<accession>Q9V022</accession>
<accession>G8ZIE1</accession>
<comment type="function">
    <text evidence="1">Catalyzes the attachment of proline to tRNA(Pro) in a two-step reaction: proline is first activated by ATP to form Pro-AMP and then transferred to the acceptor end of tRNA(Pro).</text>
</comment>
<comment type="catalytic activity">
    <reaction evidence="1">
        <text>tRNA(Pro) + L-proline + ATP = L-prolyl-tRNA(Pro) + AMP + diphosphate</text>
        <dbReference type="Rhea" id="RHEA:14305"/>
        <dbReference type="Rhea" id="RHEA-COMP:9700"/>
        <dbReference type="Rhea" id="RHEA-COMP:9702"/>
        <dbReference type="ChEBI" id="CHEBI:30616"/>
        <dbReference type="ChEBI" id="CHEBI:33019"/>
        <dbReference type="ChEBI" id="CHEBI:60039"/>
        <dbReference type="ChEBI" id="CHEBI:78442"/>
        <dbReference type="ChEBI" id="CHEBI:78532"/>
        <dbReference type="ChEBI" id="CHEBI:456215"/>
        <dbReference type="EC" id="6.1.1.15"/>
    </reaction>
</comment>
<comment type="subunit">
    <text evidence="1">Homodimer.</text>
</comment>
<comment type="subcellular location">
    <subcellularLocation>
        <location evidence="1">Cytoplasm</location>
    </subcellularLocation>
</comment>
<comment type="domain">
    <text evidence="1">Consists of three domains: the N-terminal catalytic domain, the anticodon-binding domain and the C-terminal extension.</text>
</comment>
<comment type="similarity">
    <text evidence="1">Belongs to the class-II aminoacyl-tRNA synthetase family. ProS type 3 subfamily.</text>
</comment>
<protein>
    <recommendedName>
        <fullName evidence="1">Proline--tRNA ligase</fullName>
        <ecNumber evidence="1">6.1.1.15</ecNumber>
    </recommendedName>
    <alternativeName>
        <fullName evidence="1">Prolyl-tRNA synthetase</fullName>
        <shortName evidence="1">ProRS</shortName>
    </alternativeName>
</protein>
<gene>
    <name evidence="1" type="primary">proS</name>
    <name type="ordered locus">PYRAB09760</name>
    <name type="ORF">PAB1724</name>
</gene>
<name>SYP_PYRAB</name>
<evidence type="ECO:0000255" key="1">
    <source>
        <dbReference type="HAMAP-Rule" id="MF_01571"/>
    </source>
</evidence>
<dbReference type="EC" id="6.1.1.15" evidence="1"/>
<dbReference type="EMBL" id="AJ248286">
    <property type="protein sequence ID" value="CAB49884.1"/>
    <property type="molecule type" value="Genomic_DNA"/>
</dbReference>
<dbReference type="EMBL" id="HE613800">
    <property type="protein sequence ID" value="CCE70382.1"/>
    <property type="molecule type" value="Genomic_DNA"/>
</dbReference>
<dbReference type="PIR" id="G75072">
    <property type="entry name" value="G75072"/>
</dbReference>
<dbReference type="RefSeq" id="WP_010868093.1">
    <property type="nucleotide sequence ID" value="NC_000868.1"/>
</dbReference>
<dbReference type="SMR" id="Q9V022"/>
<dbReference type="STRING" id="272844.PAB1724"/>
<dbReference type="KEGG" id="pab:PAB1724"/>
<dbReference type="PATRIC" id="fig|272844.11.peg.1028"/>
<dbReference type="eggNOG" id="arCOG00402">
    <property type="taxonomic scope" value="Archaea"/>
</dbReference>
<dbReference type="HOGENOM" id="CLU_001882_4_2_2"/>
<dbReference type="OrthoDB" id="7375at2157"/>
<dbReference type="PhylomeDB" id="Q9V022"/>
<dbReference type="Proteomes" id="UP000000810">
    <property type="component" value="Chromosome"/>
</dbReference>
<dbReference type="Proteomes" id="UP000009139">
    <property type="component" value="Chromosome"/>
</dbReference>
<dbReference type="GO" id="GO:0017101">
    <property type="term" value="C:aminoacyl-tRNA synthetase multienzyme complex"/>
    <property type="evidence" value="ECO:0007669"/>
    <property type="project" value="TreeGrafter"/>
</dbReference>
<dbReference type="GO" id="GO:0005737">
    <property type="term" value="C:cytoplasm"/>
    <property type="evidence" value="ECO:0007669"/>
    <property type="project" value="UniProtKB-SubCell"/>
</dbReference>
<dbReference type="GO" id="GO:0005524">
    <property type="term" value="F:ATP binding"/>
    <property type="evidence" value="ECO:0007669"/>
    <property type="project" value="UniProtKB-UniRule"/>
</dbReference>
<dbReference type="GO" id="GO:0004827">
    <property type="term" value="F:proline-tRNA ligase activity"/>
    <property type="evidence" value="ECO:0007669"/>
    <property type="project" value="UniProtKB-UniRule"/>
</dbReference>
<dbReference type="GO" id="GO:0006433">
    <property type="term" value="P:prolyl-tRNA aminoacylation"/>
    <property type="evidence" value="ECO:0007669"/>
    <property type="project" value="UniProtKB-UniRule"/>
</dbReference>
<dbReference type="CDD" id="cd00862">
    <property type="entry name" value="ProRS_anticodon_zinc"/>
    <property type="match status" value="1"/>
</dbReference>
<dbReference type="CDD" id="cd00778">
    <property type="entry name" value="ProRS_core_arch_euk"/>
    <property type="match status" value="1"/>
</dbReference>
<dbReference type="FunFam" id="3.40.50.800:FF:000005">
    <property type="entry name" value="bifunctional glutamate/proline--tRNA ligase"/>
    <property type="match status" value="1"/>
</dbReference>
<dbReference type="FunFam" id="3.30.930.10:FF:000037">
    <property type="entry name" value="Proline--tRNA ligase"/>
    <property type="match status" value="1"/>
</dbReference>
<dbReference type="Gene3D" id="3.40.50.800">
    <property type="entry name" value="Anticodon-binding domain"/>
    <property type="match status" value="1"/>
</dbReference>
<dbReference type="Gene3D" id="3.30.930.10">
    <property type="entry name" value="Bira Bifunctional Protein, Domain 2"/>
    <property type="match status" value="1"/>
</dbReference>
<dbReference type="Gene3D" id="3.30.110.30">
    <property type="entry name" value="C-terminal domain of ProRS"/>
    <property type="match status" value="1"/>
</dbReference>
<dbReference type="HAMAP" id="MF_01571">
    <property type="entry name" value="Pro_tRNA_synth_type3"/>
    <property type="match status" value="1"/>
</dbReference>
<dbReference type="InterPro" id="IPR002314">
    <property type="entry name" value="aa-tRNA-synt_IIb"/>
</dbReference>
<dbReference type="InterPro" id="IPR006195">
    <property type="entry name" value="aa-tRNA-synth_II"/>
</dbReference>
<dbReference type="InterPro" id="IPR045864">
    <property type="entry name" value="aa-tRNA-synth_II/BPL/LPL"/>
</dbReference>
<dbReference type="InterPro" id="IPR004154">
    <property type="entry name" value="Anticodon-bd"/>
</dbReference>
<dbReference type="InterPro" id="IPR036621">
    <property type="entry name" value="Anticodon-bd_dom_sf"/>
</dbReference>
<dbReference type="InterPro" id="IPR002316">
    <property type="entry name" value="Pro-tRNA-ligase_IIa"/>
</dbReference>
<dbReference type="InterPro" id="IPR004499">
    <property type="entry name" value="Pro-tRNA-ligase_IIa_arc-type"/>
</dbReference>
<dbReference type="InterPro" id="IPR016061">
    <property type="entry name" value="Pro-tRNA_ligase_II_C"/>
</dbReference>
<dbReference type="InterPro" id="IPR017449">
    <property type="entry name" value="Pro-tRNA_synth_II"/>
</dbReference>
<dbReference type="InterPro" id="IPR033721">
    <property type="entry name" value="ProRS_core_arch_euk"/>
</dbReference>
<dbReference type="NCBIfam" id="TIGR00408">
    <property type="entry name" value="proS_fam_I"/>
    <property type="match status" value="1"/>
</dbReference>
<dbReference type="PANTHER" id="PTHR43382:SF2">
    <property type="entry name" value="BIFUNCTIONAL GLUTAMATE_PROLINE--TRNA LIGASE"/>
    <property type="match status" value="1"/>
</dbReference>
<dbReference type="PANTHER" id="PTHR43382">
    <property type="entry name" value="PROLYL-TRNA SYNTHETASE"/>
    <property type="match status" value="1"/>
</dbReference>
<dbReference type="Pfam" id="PF03129">
    <property type="entry name" value="HGTP_anticodon"/>
    <property type="match status" value="1"/>
</dbReference>
<dbReference type="Pfam" id="PF09180">
    <property type="entry name" value="ProRS-C_1"/>
    <property type="match status" value="1"/>
</dbReference>
<dbReference type="Pfam" id="PF00587">
    <property type="entry name" value="tRNA-synt_2b"/>
    <property type="match status" value="1"/>
</dbReference>
<dbReference type="PRINTS" id="PR01046">
    <property type="entry name" value="TRNASYNTHPRO"/>
</dbReference>
<dbReference type="SMART" id="SM00946">
    <property type="entry name" value="ProRS-C_1"/>
    <property type="match status" value="1"/>
</dbReference>
<dbReference type="SUPFAM" id="SSF64586">
    <property type="entry name" value="C-terminal domain of ProRS"/>
    <property type="match status" value="1"/>
</dbReference>
<dbReference type="SUPFAM" id="SSF52954">
    <property type="entry name" value="Class II aaRS ABD-related"/>
    <property type="match status" value="1"/>
</dbReference>
<dbReference type="SUPFAM" id="SSF55681">
    <property type="entry name" value="Class II aaRS and biotin synthetases"/>
    <property type="match status" value="1"/>
</dbReference>
<dbReference type="PROSITE" id="PS50862">
    <property type="entry name" value="AA_TRNA_LIGASE_II"/>
    <property type="match status" value="1"/>
</dbReference>
<sequence>MVERKRWSENFSEWFNEVIEEAGILDKRYPVKGMNVWLPYGLKIMKNIEKFIHEEMERTGHQEVLFPALIPETEFKKEAEHIAGFEGEVFWITHAGHEPLDVKLILRPTSETAMYSMFALWIRSHADLPFKVYQIVNVYRYETKHTRPLIRVREISRFFEAHTAHADFEDAERQIKEDLEIFDNLMKRLAIAYIISKRPEWDKFPGAFYSLGAEVVMPDGRTLQIGTMHNYKQNFAKAYNILYEKEDGTHDYVHQTTFGMSERLLAAVIAIHGDDRGMVLPPTIAPIQVVIVPIPKKEKQEIVYEYAREIEEELRTAGIRVHLDMREKRPGWKFYDWELKGVPVRIEVGPRDVENSTVVLARRDKLEKITIKREELVDKVRELFDDIMKYLYERANEWLNSHIKRVETLEEAKKAFEDRRGIVEIPWCGEESCGLKMEEELDAKMLGIPYPEEKAKAPEGSRCPVCGRDAKFIARFARTY</sequence>
<keyword id="KW-0030">Aminoacyl-tRNA synthetase</keyword>
<keyword id="KW-0067">ATP-binding</keyword>
<keyword id="KW-0963">Cytoplasm</keyword>
<keyword id="KW-0436">Ligase</keyword>
<keyword id="KW-0547">Nucleotide-binding</keyword>
<keyword id="KW-0648">Protein biosynthesis</keyword>
<proteinExistence type="inferred from homology"/>
<organism>
    <name type="scientific">Pyrococcus abyssi (strain GE5 / Orsay)</name>
    <dbReference type="NCBI Taxonomy" id="272844"/>
    <lineage>
        <taxon>Archaea</taxon>
        <taxon>Methanobacteriati</taxon>
        <taxon>Methanobacteriota</taxon>
        <taxon>Thermococci</taxon>
        <taxon>Thermococcales</taxon>
        <taxon>Thermococcaceae</taxon>
        <taxon>Pyrococcus</taxon>
    </lineage>
</organism>
<reference key="1">
    <citation type="journal article" date="2003" name="Mol. Microbiol.">
        <title>An integrated analysis of the genome of the hyperthermophilic archaeon Pyrococcus abyssi.</title>
        <authorList>
            <person name="Cohen G.N."/>
            <person name="Barbe V."/>
            <person name="Flament D."/>
            <person name="Galperin M."/>
            <person name="Heilig R."/>
            <person name="Lecompte O."/>
            <person name="Poch O."/>
            <person name="Prieur D."/>
            <person name="Querellou J."/>
            <person name="Ripp R."/>
            <person name="Thierry J.-C."/>
            <person name="Van der Oost J."/>
            <person name="Weissenbach J."/>
            <person name="Zivanovic Y."/>
            <person name="Forterre P."/>
        </authorList>
    </citation>
    <scope>NUCLEOTIDE SEQUENCE [LARGE SCALE GENOMIC DNA]</scope>
    <source>
        <strain>GE5 / Orsay</strain>
    </source>
</reference>
<reference key="2">
    <citation type="journal article" date="2012" name="Curr. Microbiol.">
        <title>Re-annotation of two hyperthermophilic archaea Pyrococcus abyssi GE5 and Pyrococcus furiosus DSM 3638.</title>
        <authorList>
            <person name="Gao J."/>
            <person name="Wang J."/>
        </authorList>
    </citation>
    <scope>GENOME REANNOTATION</scope>
    <source>
        <strain>GE5 / Orsay</strain>
    </source>
</reference>
<feature type="chain" id="PRO_0000249169" description="Proline--tRNA ligase">
    <location>
        <begin position="1"/>
        <end position="480"/>
    </location>
</feature>